<feature type="chain" id="PRO_0000362833" description="NAD(P)H-quinone oxidoreductase subunit 3, chloroplastic">
    <location>
        <begin position="1"/>
        <end position="120"/>
    </location>
</feature>
<feature type="transmembrane region" description="Helical" evidence="1">
    <location>
        <begin position="9"/>
        <end position="29"/>
    </location>
</feature>
<feature type="transmembrane region" description="Helical" evidence="1">
    <location>
        <begin position="64"/>
        <end position="84"/>
    </location>
</feature>
<feature type="transmembrane region" description="Helical" evidence="1">
    <location>
        <begin position="88"/>
        <end position="108"/>
    </location>
</feature>
<sequence length="120" mass="13918">MFLLYEYDIFWAFLLISSVIPILAFLLSGILAPIRKDPEKLSSYESGIEPIGDAWLQFRIRYYMFALVFVVFDVETVFLYPWAMSFDVLGVSVFIEALIFVLILIVGLVYAWRKGALEWS</sequence>
<reference key="1">
    <citation type="journal article" date="2008" name="BMC Plant Biol.">
        <title>Comparative chloroplast genomics and phylogenetics of Fagopyrum esculentum ssp. ancestrale - a wild ancestor of cultivated buckwheat.</title>
        <authorList>
            <person name="Logacheva M.D."/>
            <person name="Samigullin T.H."/>
            <person name="Dhingra A."/>
            <person name="Penin A.A."/>
        </authorList>
    </citation>
    <scope>NUCLEOTIDE SEQUENCE [LARGE SCALE GENOMIC DNA]</scope>
</reference>
<geneLocation type="chloroplast"/>
<name>NU3C_FAGEA</name>
<evidence type="ECO:0000255" key="1">
    <source>
        <dbReference type="HAMAP-Rule" id="MF_01394"/>
    </source>
</evidence>
<organism>
    <name type="scientific">Fagopyrum esculentum subsp. ancestrale</name>
    <name type="common">Wild buckwheat</name>
    <dbReference type="NCBI Taxonomy" id="180217"/>
    <lineage>
        <taxon>Eukaryota</taxon>
        <taxon>Viridiplantae</taxon>
        <taxon>Streptophyta</taxon>
        <taxon>Embryophyta</taxon>
        <taxon>Tracheophyta</taxon>
        <taxon>Spermatophyta</taxon>
        <taxon>Magnoliopsida</taxon>
        <taxon>eudicotyledons</taxon>
        <taxon>Gunneridae</taxon>
        <taxon>Pentapetalae</taxon>
        <taxon>Caryophyllales</taxon>
        <taxon>Polygonaceae</taxon>
        <taxon>Polygonoideae</taxon>
        <taxon>Fagopyreae</taxon>
        <taxon>Fagopyrum</taxon>
    </lineage>
</organism>
<comment type="function">
    <text evidence="1">NDH shuttles electrons from NAD(P)H:plastoquinone, via FMN and iron-sulfur (Fe-S) centers, to quinones in the photosynthetic chain and possibly in a chloroplast respiratory chain. The immediate electron acceptor for the enzyme in this species is believed to be plastoquinone. Couples the redox reaction to proton translocation, and thus conserves the redox energy in a proton gradient.</text>
</comment>
<comment type="catalytic activity">
    <reaction evidence="1">
        <text>a plastoquinone + NADH + (n+1) H(+)(in) = a plastoquinol + NAD(+) + n H(+)(out)</text>
        <dbReference type="Rhea" id="RHEA:42608"/>
        <dbReference type="Rhea" id="RHEA-COMP:9561"/>
        <dbReference type="Rhea" id="RHEA-COMP:9562"/>
        <dbReference type="ChEBI" id="CHEBI:15378"/>
        <dbReference type="ChEBI" id="CHEBI:17757"/>
        <dbReference type="ChEBI" id="CHEBI:57540"/>
        <dbReference type="ChEBI" id="CHEBI:57945"/>
        <dbReference type="ChEBI" id="CHEBI:62192"/>
    </reaction>
</comment>
<comment type="catalytic activity">
    <reaction evidence="1">
        <text>a plastoquinone + NADPH + (n+1) H(+)(in) = a plastoquinol + NADP(+) + n H(+)(out)</text>
        <dbReference type="Rhea" id="RHEA:42612"/>
        <dbReference type="Rhea" id="RHEA-COMP:9561"/>
        <dbReference type="Rhea" id="RHEA-COMP:9562"/>
        <dbReference type="ChEBI" id="CHEBI:15378"/>
        <dbReference type="ChEBI" id="CHEBI:17757"/>
        <dbReference type="ChEBI" id="CHEBI:57783"/>
        <dbReference type="ChEBI" id="CHEBI:58349"/>
        <dbReference type="ChEBI" id="CHEBI:62192"/>
    </reaction>
</comment>
<comment type="subunit">
    <text evidence="1">NDH is composed of at least 16 different subunits, 5 of which are encoded in the nucleus.</text>
</comment>
<comment type="subcellular location">
    <subcellularLocation>
        <location evidence="1">Plastid</location>
        <location evidence="1">Chloroplast thylakoid membrane</location>
        <topology evidence="1">Multi-pass membrane protein</topology>
    </subcellularLocation>
</comment>
<comment type="similarity">
    <text evidence="1">Belongs to the complex I subunit 3 family.</text>
</comment>
<proteinExistence type="inferred from homology"/>
<protein>
    <recommendedName>
        <fullName evidence="1">NAD(P)H-quinone oxidoreductase subunit 3, chloroplastic</fullName>
        <ecNumber evidence="1">7.1.1.-</ecNumber>
    </recommendedName>
    <alternativeName>
        <fullName evidence="1">NAD(P)H dehydrogenase subunit 3</fullName>
    </alternativeName>
    <alternativeName>
        <fullName evidence="1">NADH-plastoquinone oxidoreductase subunit 3</fullName>
    </alternativeName>
</protein>
<keyword id="KW-0150">Chloroplast</keyword>
<keyword id="KW-0472">Membrane</keyword>
<keyword id="KW-0520">NAD</keyword>
<keyword id="KW-0521">NADP</keyword>
<keyword id="KW-0934">Plastid</keyword>
<keyword id="KW-0618">Plastoquinone</keyword>
<keyword id="KW-0874">Quinone</keyword>
<keyword id="KW-0793">Thylakoid</keyword>
<keyword id="KW-1278">Translocase</keyword>
<keyword id="KW-0812">Transmembrane</keyword>
<keyword id="KW-1133">Transmembrane helix</keyword>
<keyword id="KW-0813">Transport</keyword>
<dbReference type="EC" id="7.1.1.-" evidence="1"/>
<dbReference type="EMBL" id="EU254477">
    <property type="protein sequence ID" value="ABY79737.1"/>
    <property type="molecule type" value="Genomic_DNA"/>
</dbReference>
<dbReference type="RefSeq" id="YP_001936522.1">
    <property type="nucleotide sequence ID" value="NC_010776.1"/>
</dbReference>
<dbReference type="SMR" id="B2XWK9"/>
<dbReference type="GeneID" id="6336047"/>
<dbReference type="GO" id="GO:0009535">
    <property type="term" value="C:chloroplast thylakoid membrane"/>
    <property type="evidence" value="ECO:0007669"/>
    <property type="project" value="UniProtKB-SubCell"/>
</dbReference>
<dbReference type="GO" id="GO:0030964">
    <property type="term" value="C:NADH dehydrogenase complex"/>
    <property type="evidence" value="ECO:0007669"/>
    <property type="project" value="TreeGrafter"/>
</dbReference>
<dbReference type="GO" id="GO:0008137">
    <property type="term" value="F:NADH dehydrogenase (ubiquinone) activity"/>
    <property type="evidence" value="ECO:0007669"/>
    <property type="project" value="InterPro"/>
</dbReference>
<dbReference type="GO" id="GO:0048038">
    <property type="term" value="F:quinone binding"/>
    <property type="evidence" value="ECO:0007669"/>
    <property type="project" value="UniProtKB-KW"/>
</dbReference>
<dbReference type="GO" id="GO:0019684">
    <property type="term" value="P:photosynthesis, light reaction"/>
    <property type="evidence" value="ECO:0007669"/>
    <property type="project" value="UniProtKB-UniRule"/>
</dbReference>
<dbReference type="FunFam" id="1.20.58.1610:FF:000001">
    <property type="entry name" value="NAD(P)H-quinone oxidoreductase subunit 3, chloroplastic"/>
    <property type="match status" value="1"/>
</dbReference>
<dbReference type="Gene3D" id="1.20.58.1610">
    <property type="entry name" value="NADH:ubiquinone/plastoquinone oxidoreductase, chain 3"/>
    <property type="match status" value="1"/>
</dbReference>
<dbReference type="HAMAP" id="MF_01394">
    <property type="entry name" value="NDH1_NuoA"/>
    <property type="match status" value="1"/>
</dbReference>
<dbReference type="InterPro" id="IPR023043">
    <property type="entry name" value="NAD(P)H_OxRDtase_bac/plastid"/>
</dbReference>
<dbReference type="InterPro" id="IPR000440">
    <property type="entry name" value="NADH_UbQ/plastoQ_OxRdtase_su3"/>
</dbReference>
<dbReference type="InterPro" id="IPR038430">
    <property type="entry name" value="NDAH_ubi_oxred_su3_sf"/>
</dbReference>
<dbReference type="PANTHER" id="PTHR11058">
    <property type="entry name" value="NADH-UBIQUINONE OXIDOREDUCTASE CHAIN 3"/>
    <property type="match status" value="1"/>
</dbReference>
<dbReference type="PANTHER" id="PTHR11058:SF9">
    <property type="entry name" value="NADH-UBIQUINONE OXIDOREDUCTASE CHAIN 3"/>
    <property type="match status" value="1"/>
</dbReference>
<dbReference type="Pfam" id="PF00507">
    <property type="entry name" value="Oxidored_q4"/>
    <property type="match status" value="1"/>
</dbReference>
<gene>
    <name evidence="1" type="primary">ndhC</name>
</gene>
<accession>B2XWK9</accession>